<proteinExistence type="inferred from homology"/>
<keyword id="KW-0677">Repeat</keyword>
<keyword id="KW-0686">Riboflavin biosynthesis</keyword>
<keyword id="KW-0808">Transferase</keyword>
<comment type="function">
    <text evidence="1">Catalyzes the dismutation of two molecules of 6,7-dimethyl-8-ribityllumazine, resulting in the formation of riboflavin and 5-amino-6-(D-ribitylamino)uracil.</text>
</comment>
<comment type="catalytic activity">
    <reaction>
        <text>2 6,7-dimethyl-8-(1-D-ribityl)lumazine + H(+) = 5-amino-6-(D-ribitylamino)uracil + riboflavin</text>
        <dbReference type="Rhea" id="RHEA:20772"/>
        <dbReference type="ChEBI" id="CHEBI:15378"/>
        <dbReference type="ChEBI" id="CHEBI:15934"/>
        <dbReference type="ChEBI" id="CHEBI:57986"/>
        <dbReference type="ChEBI" id="CHEBI:58201"/>
        <dbReference type="EC" id="2.5.1.9"/>
    </reaction>
</comment>
<comment type="pathway">
    <text>Cofactor biosynthesis; riboflavin biosynthesis; riboflavin from 2-hydroxy-3-oxobutyl phosphate and 5-amino-6-(D-ribitylamino)uracil: step 2/2.</text>
</comment>
<comment type="subunit">
    <text evidence="1">Homotrimer.</text>
</comment>
<sequence length="215" mass="23089">MFTGIVEETGTIQAIKKTGLSMALTIAASKVTSDVRLGDSIAVNGICLTVTGFSDNQFTVDVMPETVKATSLNGLSKGSKVNLERAMSANGRFGGHFVSGHVDGTAEITRIEKKSNAVYYDLKLSPELTKTLVLKGSITVDGVSSTIFGLSDESVTVSVIPHTISETIFRTKAVGSIVNIECDMIGKYLYRFLHKTEQTKSNQTITEAFFSENGF</sequence>
<organism>
    <name type="scientific">Bacillus amyloliquefaciens</name>
    <name type="common">Bacillus velezensis</name>
    <dbReference type="NCBI Taxonomy" id="1390"/>
    <lineage>
        <taxon>Bacteria</taxon>
        <taxon>Bacillati</taxon>
        <taxon>Bacillota</taxon>
        <taxon>Bacilli</taxon>
        <taxon>Bacillales</taxon>
        <taxon>Bacillaceae</taxon>
        <taxon>Bacillus</taxon>
        <taxon>Bacillus amyloliquefaciens group</taxon>
    </lineage>
</organism>
<feature type="chain" id="PRO_0000068158" description="Riboflavin synthase">
    <location>
        <begin position="1"/>
        <end position="215"/>
    </location>
</feature>
<feature type="repeat" description="Lumazine-binding 1">
    <location>
        <begin position="1"/>
        <end position="96"/>
    </location>
</feature>
<feature type="repeat" description="Lumazine-binding 2">
    <location>
        <begin position="97"/>
        <end position="193"/>
    </location>
</feature>
<feature type="binding site" evidence="3">
    <location>
        <begin position="4"/>
        <end position="6"/>
    </location>
    <ligand>
        <name>2,4-dihydroxypteridine</name>
        <dbReference type="ChEBI" id="CHEBI:16489"/>
        <label>1</label>
    </ligand>
</feature>
<feature type="binding site" evidence="3">
    <location>
        <begin position="47"/>
        <end position="49"/>
    </location>
    <ligand>
        <name>2,4-dihydroxypteridine</name>
        <dbReference type="ChEBI" id="CHEBI:16489"/>
        <label>2</label>
        <note>ligand shared between two trimeric partners</note>
    </ligand>
</feature>
<feature type="binding site" evidence="2">
    <location>
        <begin position="61"/>
        <end position="66"/>
    </location>
    <ligand>
        <name>2,4-dihydroxypteridine</name>
        <dbReference type="ChEBI" id="CHEBI:16489"/>
        <label>2</label>
        <note>ligand shared between two trimeric partners</note>
    </ligand>
</feature>
<feature type="binding site" evidence="3">
    <location>
        <begin position="100"/>
        <end position="102"/>
    </location>
    <ligand>
        <name>2,4-dihydroxypteridine</name>
        <dbReference type="ChEBI" id="CHEBI:16489"/>
        <label>2</label>
        <note>ligand shared between two trimeric partners</note>
    </ligand>
</feature>
<feature type="binding site" description="in other chain" evidence="3">
    <location>
        <position position="135"/>
    </location>
    <ligand>
        <name>2,4-dihydroxypteridine</name>
        <dbReference type="ChEBI" id="CHEBI:16489"/>
        <label>2</label>
        <note>ligand shared between two trimeric partners</note>
    </ligand>
</feature>
<feature type="binding site" evidence="3">
    <location>
        <begin position="144"/>
        <end position="146"/>
    </location>
    <ligand>
        <name>2,4-dihydroxypteridine</name>
        <dbReference type="ChEBI" id="CHEBI:16489"/>
        <label>1</label>
    </ligand>
</feature>
<feature type="binding site" evidence="3">
    <location>
        <begin position="158"/>
        <end position="163"/>
    </location>
    <ligand>
        <name>2,4-dihydroxypteridine</name>
        <dbReference type="ChEBI" id="CHEBI:16489"/>
        <label>1</label>
    </ligand>
</feature>
<dbReference type="EC" id="2.5.1.9"/>
<dbReference type="EMBL" id="X95955">
    <property type="protein sequence ID" value="CAA65190.1"/>
    <property type="molecule type" value="Genomic_DNA"/>
</dbReference>
<dbReference type="PIR" id="T50542">
    <property type="entry name" value="T50542"/>
</dbReference>
<dbReference type="SMR" id="Q44680"/>
<dbReference type="STRING" id="692420.BAMF_2226"/>
<dbReference type="eggNOG" id="COG0307">
    <property type="taxonomic scope" value="Bacteria"/>
</dbReference>
<dbReference type="UniPathway" id="UPA00275">
    <property type="reaction ID" value="UER00405"/>
</dbReference>
<dbReference type="GO" id="GO:0004746">
    <property type="term" value="F:riboflavin synthase activity"/>
    <property type="evidence" value="ECO:0007669"/>
    <property type="project" value="UniProtKB-EC"/>
</dbReference>
<dbReference type="GO" id="GO:0009231">
    <property type="term" value="P:riboflavin biosynthetic process"/>
    <property type="evidence" value="ECO:0007669"/>
    <property type="project" value="UniProtKB-UniPathway"/>
</dbReference>
<dbReference type="CDD" id="cd00402">
    <property type="entry name" value="Riboflavin_synthase_like"/>
    <property type="match status" value="1"/>
</dbReference>
<dbReference type="FunFam" id="2.40.30.20:FF:000003">
    <property type="entry name" value="Riboflavin synthase, alpha subunit"/>
    <property type="match status" value="1"/>
</dbReference>
<dbReference type="FunFam" id="2.40.30.20:FF:000004">
    <property type="entry name" value="Riboflavin synthase, alpha subunit"/>
    <property type="match status" value="1"/>
</dbReference>
<dbReference type="Gene3D" id="2.40.30.20">
    <property type="match status" value="2"/>
</dbReference>
<dbReference type="InterPro" id="IPR023366">
    <property type="entry name" value="ATP_synth_asu-like_sf"/>
</dbReference>
<dbReference type="InterPro" id="IPR001783">
    <property type="entry name" value="Lumazine-bd"/>
</dbReference>
<dbReference type="InterPro" id="IPR026017">
    <property type="entry name" value="Lumazine-bd_dom"/>
</dbReference>
<dbReference type="InterPro" id="IPR017938">
    <property type="entry name" value="Riboflavin_synthase-like_b-brl"/>
</dbReference>
<dbReference type="NCBIfam" id="NF006767">
    <property type="entry name" value="PRK09289.1"/>
    <property type="match status" value="1"/>
</dbReference>
<dbReference type="NCBIfam" id="NF009566">
    <property type="entry name" value="PRK13020.1"/>
    <property type="match status" value="1"/>
</dbReference>
<dbReference type="NCBIfam" id="TIGR00187">
    <property type="entry name" value="ribE"/>
    <property type="match status" value="1"/>
</dbReference>
<dbReference type="PANTHER" id="PTHR21098:SF12">
    <property type="entry name" value="RIBOFLAVIN SYNTHASE"/>
    <property type="match status" value="1"/>
</dbReference>
<dbReference type="PANTHER" id="PTHR21098">
    <property type="entry name" value="RIBOFLAVIN SYNTHASE ALPHA CHAIN"/>
    <property type="match status" value="1"/>
</dbReference>
<dbReference type="Pfam" id="PF00677">
    <property type="entry name" value="Lum_binding"/>
    <property type="match status" value="2"/>
</dbReference>
<dbReference type="PIRSF" id="PIRSF000498">
    <property type="entry name" value="Riboflavin_syn_A"/>
    <property type="match status" value="1"/>
</dbReference>
<dbReference type="SUPFAM" id="SSF63380">
    <property type="entry name" value="Riboflavin synthase domain-like"/>
    <property type="match status" value="2"/>
</dbReference>
<dbReference type="PROSITE" id="PS51177">
    <property type="entry name" value="LUMAZINE_BIND"/>
    <property type="match status" value="2"/>
</dbReference>
<evidence type="ECO:0000250" key="1"/>
<evidence type="ECO:0000250" key="2">
    <source>
        <dbReference type="UniProtKB" id="P0AFU8"/>
    </source>
</evidence>
<evidence type="ECO:0000250" key="3">
    <source>
        <dbReference type="UniProtKB" id="Q2YN92"/>
    </source>
</evidence>
<protein>
    <recommendedName>
        <fullName>Riboflavin synthase</fullName>
        <shortName>RS</shortName>
        <ecNumber>2.5.1.9</ecNumber>
    </recommendedName>
</protein>
<name>RISA_BACAM</name>
<reference key="1">
    <citation type="journal article" date="1997" name="Mol. Biol. (Mosk.)">
        <title>Riboflavin biosynthetic genes in Bacillus amyloliquefaciens: primary structure, organization and regulation of activity.</title>
        <authorList>
            <person name="Gusarov I.I."/>
            <person name="Kreneva R.A."/>
            <person name="Podcharniaev D.A."/>
            <person name="Iomantas I.U.V."/>
            <person name="Abalakina E.G."/>
            <person name="Stoinova N.V."/>
            <person name="Perumov D.A."/>
            <person name="Kozlov I.U.I."/>
        </authorList>
    </citation>
    <scope>NUCLEOTIDE SEQUENCE [GENOMIC DNA]</scope>
    <source>
        <strain>A 50</strain>
    </source>
</reference>
<gene>
    <name type="primary">ribE</name>
    <name type="synonym">ribB</name>
</gene>
<accession>Q44680</accession>